<protein>
    <recommendedName>
        <fullName evidence="4">Type I acyl-CoA thioesterase mpaH</fullName>
        <ecNumber evidence="6">3.1.1.-</ecNumber>
    </recommendedName>
    <alternativeName>
        <fullName evidence="4">Mycophenolic acid biosynthesis cluster protein H</fullName>
    </alternativeName>
</protein>
<dbReference type="EC" id="3.1.1.-" evidence="6"/>
<dbReference type="EMBL" id="HG792019">
    <property type="protein sequence ID" value="CDM36721.1"/>
    <property type="molecule type" value="Genomic_DNA"/>
</dbReference>
<dbReference type="SMR" id="W6QL41"/>
<dbReference type="STRING" id="1365484.W6QL41"/>
<dbReference type="ESTHER" id="penrf-mpah">
    <property type="family name" value="MpaH"/>
</dbReference>
<dbReference type="OMA" id="REQMPRP"/>
<dbReference type="OrthoDB" id="94039at2759"/>
<dbReference type="UniPathway" id="UPA00213"/>
<dbReference type="Proteomes" id="UP000030686">
    <property type="component" value="Unassembled WGS sequence"/>
</dbReference>
<dbReference type="GO" id="GO:0005782">
    <property type="term" value="C:peroxisomal matrix"/>
    <property type="evidence" value="ECO:0000250"/>
    <property type="project" value="GO_Central"/>
</dbReference>
<dbReference type="GO" id="GO:0016787">
    <property type="term" value="F:hydrolase activity"/>
    <property type="evidence" value="ECO:0000250"/>
    <property type="project" value="GO_Central"/>
</dbReference>
<dbReference type="GO" id="GO:0140722">
    <property type="term" value="P:mycophenolic acid biosynthetic process"/>
    <property type="evidence" value="ECO:0000250"/>
    <property type="project" value="GO_Central"/>
</dbReference>
<dbReference type="GO" id="GO:0016114">
    <property type="term" value="P:terpenoid biosynthetic process"/>
    <property type="evidence" value="ECO:0007669"/>
    <property type="project" value="UniProtKB-UniPathway"/>
</dbReference>
<dbReference type="Gene3D" id="3.40.50.1820">
    <property type="entry name" value="alpha/beta hydrolase"/>
    <property type="match status" value="1"/>
</dbReference>
<dbReference type="InterPro" id="IPR000073">
    <property type="entry name" value="AB_hydrolase_1"/>
</dbReference>
<dbReference type="InterPro" id="IPR029058">
    <property type="entry name" value="AB_hydrolase_fold"/>
</dbReference>
<dbReference type="Pfam" id="PF12697">
    <property type="entry name" value="Abhydrolase_6"/>
    <property type="match status" value="1"/>
</dbReference>
<dbReference type="SUPFAM" id="SSF53474">
    <property type="entry name" value="alpha/beta-Hydrolases"/>
    <property type="match status" value="1"/>
</dbReference>
<feature type="chain" id="PRO_0000449214" description="Type I acyl-CoA thioesterase mpaH">
    <location>
        <begin position="1"/>
        <end position="433"/>
    </location>
</feature>
<feature type="region of interest" description="Abhydrolase domain" evidence="2">
    <location>
        <begin position="58"/>
        <end position="246"/>
    </location>
</feature>
<feature type="active site" description="Nucleophile" evidence="1">
    <location>
        <position position="139"/>
    </location>
</feature>
<feature type="active site" evidence="1">
    <location>
        <position position="163"/>
    </location>
</feature>
<feature type="active site" evidence="1">
    <location>
        <position position="365"/>
    </location>
</feature>
<feature type="binding site" evidence="1">
    <location>
        <position position="60"/>
    </location>
    <ligand>
        <name>substrate</name>
    </ligand>
</feature>
<feature type="binding site" evidence="1">
    <location>
        <position position="140"/>
    </location>
    <ligand>
        <name>substrate</name>
    </ligand>
</feature>
<accession>W6QL41</accession>
<reference key="1">
    <citation type="journal article" date="2014" name="Nat. Commun.">
        <title>Multiple recent horizontal transfers of a large genomic region in cheese making fungi.</title>
        <authorList>
            <person name="Cheeseman K."/>
            <person name="Ropars J."/>
            <person name="Renault P."/>
            <person name="Dupont J."/>
            <person name="Gouzy J."/>
            <person name="Branca A."/>
            <person name="Abraham A.-L."/>
            <person name="Ceppi M."/>
            <person name="Conseiller E."/>
            <person name="Debuchy R."/>
            <person name="Malagnac F."/>
            <person name="Goarin A."/>
            <person name="Silar P."/>
            <person name="Lacoste S."/>
            <person name="Sallet E."/>
            <person name="Bensimon A."/>
            <person name="Giraud T."/>
            <person name="Brygoo Y."/>
        </authorList>
    </citation>
    <scope>NUCLEOTIDE SEQUENCE [LARGE SCALE GENOMIC DNA]</scope>
    <source>
        <strain>FM164</strain>
    </source>
</reference>
<reference key="2">
    <citation type="journal article" date="2016" name="PLoS ONE">
        <title>Identification and functional analysis of the mycophenolic acid gene cluster of Penicillium roqueforti.</title>
        <authorList>
            <person name="Del-Cid A."/>
            <person name="Gil-Duran C."/>
            <person name="Vaca I."/>
            <person name="Rojas-Aedo J.F."/>
            <person name="Garcia-Rico R.O."/>
            <person name="Levican G."/>
            <person name="Chavez R."/>
        </authorList>
    </citation>
    <scope>FUNCTION</scope>
    <scope>DISRUPTION PHENOTYPE</scope>
    <scope>PATHWAY</scope>
</reference>
<organism>
    <name type="scientific">Penicillium roqueforti (strain FM164)</name>
    <dbReference type="NCBI Taxonomy" id="1365484"/>
    <lineage>
        <taxon>Eukaryota</taxon>
        <taxon>Fungi</taxon>
        <taxon>Dikarya</taxon>
        <taxon>Ascomycota</taxon>
        <taxon>Pezizomycotina</taxon>
        <taxon>Eurotiomycetes</taxon>
        <taxon>Eurotiomycetidae</taxon>
        <taxon>Eurotiales</taxon>
        <taxon>Aspergillaceae</taxon>
        <taxon>Penicillium</taxon>
    </lineage>
</organism>
<name>MPAH_PENRF</name>
<keyword id="KW-0378">Hydrolase</keyword>
<keyword id="KW-0576">Peroxisome</keyword>
<keyword id="KW-1185">Reference proteome</keyword>
<sequence>MSSEKFTVTEHLVPGSYIREYPGSTVTQEDVLKIHVKQYTPKHEGPVPADAITFIAAHGVGLPKELYEPLWDELLERTNGFHIHGIWVADVASMNQSGIQNEDKLSMDCSWMDHPRDLFLMINHFREQMPRPLVGVGHSFGGNIITNLAYLHPRLFTTLLLIDPLIQLSPPSMGFGTDPPGPINYTLWRNDVWPSREAAIRANRGLIHGWDPRCVDRMAKYFFRDLPTPLYPDVEAVKARFDAAADTTATPVTLATPKYHELIAQIRQNFNARDPTTGRIEIPRATHADMDPLVASIPLYRPEPRSTFRRLGTLRPSCLWIVGGATFLNVDEIHEGVKICGSGIGGSGGVSEGRVKEVILPGLGHLMPFQEIGTVVGPCVAWLQQEMDRFRQMEREWGEERKGKSHLVLEKNWYKVLKPMPSGRGKGGRKEKL</sequence>
<evidence type="ECO:0000250" key="1">
    <source>
        <dbReference type="UniProtKB" id="A0A0B5LB55"/>
    </source>
</evidence>
<evidence type="ECO:0000255" key="2"/>
<evidence type="ECO:0000269" key="3">
    <source>
    </source>
</evidence>
<evidence type="ECO:0000303" key="4">
    <source>
    </source>
</evidence>
<evidence type="ECO:0000305" key="5"/>
<evidence type="ECO:0000305" key="6">
    <source>
    </source>
</evidence>
<comment type="function">
    <text evidence="1 3 6">Type I acyl-CoA thioesterase; part of the gene cluster that mediates the biosynthesis of mycophenolic acid (MPA), the first isolated antibiotic natural product in the world obtained from a culture of Penicillium brevicompactum in 1893 (PubMed:26751579). MpaH acts as a peroxisomal acyl-CoA hydrolase that converts MPA-CoA into the final product MPA (By similarity). The first step of the pathway is the synthesis of 5-methylorsellinic acid (5MOA) by the cytosolic polyketide synthase mpaC. 5MOA is then converted to the phthalide compound 5,7-dihydroxy-4,6-dimethylphthalide (DHMP) by the endoplasmic reticulum-bound cytochrome P450 monooxygenase mpaDE. MpaDE first catalyzes hydroxylation of 5-MOA to 4,6-dihydroxy-2-(hydroxymethyl)-3-methylbenzoic acid (DHMB). MpaDE then acts as a lactone synthase that catalyzes the ring closure to convert DHMB into DHMP. The next step is the prenylation of DHMP by the Golgi apparatus-associated prenyltransferase mpaA to yield farnesyl-DHMP (FDHMP). The ER-bound oxygenase mpaB then mediates the oxidative cleavage the C19-C20 double bond in FDHMP to yield FDHMP-3C via a mycophenolic aldehyde intermediate. The O-methyltransferase mpaG catalyzes the methylation of FDHMP-3C to yield MFDHMP-3C. After the cytosolic methylation of FDHMP-3C, MFDHMP-3C enters into peroxisomes probably via free diffusion due to its low molecular weight. Upon a peroxisomal CoA ligation reaction, catalyzed by a beta-oxidation component enzyme acyl-CoA ligase ACL891, MFDHMP-3C-CoA would then be restricted to peroxisomes for the following beta-oxidation pathway steps. The peroxisomal beta-oxidation machinery than converts MFDHMP-3C-CoA into MPA_CoA, via a beta-oxidation chain-shortening process. Finally mpaH acts as a peroxisomal acyl-CoA hydrolase with high substrate specificity toward MPA-CoA to release the final product MPA (Probable) (PubMed:26751579).</text>
</comment>
<comment type="catalytic activity">
    <reaction evidence="1">
        <text>mycophenolyl-CoA + H2O = mycophenolate + CoA + H(+)</text>
        <dbReference type="Rhea" id="RHEA:66704"/>
        <dbReference type="ChEBI" id="CHEBI:15377"/>
        <dbReference type="ChEBI" id="CHEBI:15378"/>
        <dbReference type="ChEBI" id="CHEBI:57287"/>
        <dbReference type="ChEBI" id="CHEBI:62932"/>
        <dbReference type="ChEBI" id="CHEBI:167447"/>
    </reaction>
    <physiologicalReaction direction="left-to-right" evidence="1">
        <dbReference type="Rhea" id="RHEA:66705"/>
    </physiologicalReaction>
</comment>
<comment type="pathway">
    <text evidence="3">Secondary metabolite biosynthesis; terpenoid biosynthesis.</text>
</comment>
<comment type="subunit">
    <text evidence="1">Homodimer.</text>
</comment>
<comment type="subcellular location">
    <subcellularLocation>
        <location evidence="1">Peroxisome matrix</location>
    </subcellularLocation>
    <text evidence="1">The mpaH' location in peroxisomes is required for the unique cooperation between biosynthetic and beta-oxidation catabolism machineries to produce final MPA.</text>
</comment>
<comment type="disruption phenotype">
    <text evidence="3">Results in dramatic reduction in MPA production.</text>
</comment>
<comment type="similarity">
    <text evidence="5">Belongs to the AB hydrolase superfamily. MpaH hydrolase family.</text>
</comment>
<proteinExistence type="inferred from homology"/>
<gene>
    <name evidence="4" type="primary">mpaH</name>
    <name type="ORF">PROQFM164_S05g000554</name>
</gene>